<feature type="chain" id="PRO_1000018756" description="Phosphoribosylaminoimidazole-succinocarboxamide synthase">
    <location>
        <begin position="1"/>
        <end position="236"/>
    </location>
</feature>
<sequence>MEKREELYRGKAKSVYQTDDADRLILLFRNDTSAFDGKRIEQLDRKGAVNNKFNAFIMQKLEAAGIPTQFDKLLSDTECLVKKLDMIPVECVVRNFAAGSLVRRLGVEEGIALTPPTFELFLKNDALGDPFINESHVQAFGWATPEQLAQMKTYSFKVNEVLNKLFDDAGLLLVDFKLEFGLFHGQIVLGDEFSPDGCRLWDKETRKKMDKDRFRQGLGDVIEAYEEVAKRLGVPL</sequence>
<organism>
    <name type="scientific">Pseudomonas aeruginosa (strain UCBPP-PA14)</name>
    <dbReference type="NCBI Taxonomy" id="208963"/>
    <lineage>
        <taxon>Bacteria</taxon>
        <taxon>Pseudomonadati</taxon>
        <taxon>Pseudomonadota</taxon>
        <taxon>Gammaproteobacteria</taxon>
        <taxon>Pseudomonadales</taxon>
        <taxon>Pseudomonadaceae</taxon>
        <taxon>Pseudomonas</taxon>
    </lineage>
</organism>
<proteinExistence type="inferred from homology"/>
<name>PUR7_PSEAB</name>
<dbReference type="EC" id="6.3.2.6" evidence="1"/>
<dbReference type="EMBL" id="CP000438">
    <property type="protein sequence ID" value="ABJ10177.1"/>
    <property type="molecule type" value="Genomic_DNA"/>
</dbReference>
<dbReference type="RefSeq" id="WP_003108622.1">
    <property type="nucleotide sequence ID" value="NZ_CP034244.1"/>
</dbReference>
<dbReference type="SMR" id="Q02IH8"/>
<dbReference type="KEGG" id="pau:PA14_51240"/>
<dbReference type="PseudoCAP" id="PA14_51240"/>
<dbReference type="HOGENOM" id="CLU_061495_2_0_6"/>
<dbReference type="BioCyc" id="PAER208963:G1G74-4307-MONOMER"/>
<dbReference type="UniPathway" id="UPA00074">
    <property type="reaction ID" value="UER00131"/>
</dbReference>
<dbReference type="Proteomes" id="UP000000653">
    <property type="component" value="Chromosome"/>
</dbReference>
<dbReference type="GO" id="GO:0005829">
    <property type="term" value="C:cytosol"/>
    <property type="evidence" value="ECO:0007669"/>
    <property type="project" value="TreeGrafter"/>
</dbReference>
<dbReference type="GO" id="GO:0005524">
    <property type="term" value="F:ATP binding"/>
    <property type="evidence" value="ECO:0007669"/>
    <property type="project" value="UniProtKB-KW"/>
</dbReference>
<dbReference type="GO" id="GO:0004639">
    <property type="term" value="F:phosphoribosylaminoimidazolesuccinocarboxamide synthase activity"/>
    <property type="evidence" value="ECO:0007669"/>
    <property type="project" value="UniProtKB-UniRule"/>
</dbReference>
<dbReference type="GO" id="GO:0006189">
    <property type="term" value="P:'de novo' IMP biosynthetic process"/>
    <property type="evidence" value="ECO:0007669"/>
    <property type="project" value="UniProtKB-UniRule"/>
</dbReference>
<dbReference type="GO" id="GO:0009236">
    <property type="term" value="P:cobalamin biosynthetic process"/>
    <property type="evidence" value="ECO:0007669"/>
    <property type="project" value="InterPro"/>
</dbReference>
<dbReference type="CDD" id="cd01415">
    <property type="entry name" value="SAICAR_synt_PurC"/>
    <property type="match status" value="1"/>
</dbReference>
<dbReference type="FunFam" id="3.30.200.20:FF:000086">
    <property type="entry name" value="Phosphoribosylaminoimidazole-succinocarboxamide synthase"/>
    <property type="match status" value="1"/>
</dbReference>
<dbReference type="FunFam" id="3.30.470.20:FF:000006">
    <property type="entry name" value="Phosphoribosylaminoimidazole-succinocarboxamide synthase"/>
    <property type="match status" value="1"/>
</dbReference>
<dbReference type="Gene3D" id="3.30.470.20">
    <property type="entry name" value="ATP-grasp fold, B domain"/>
    <property type="match status" value="1"/>
</dbReference>
<dbReference type="Gene3D" id="3.30.200.20">
    <property type="entry name" value="Phosphorylase Kinase, domain 1"/>
    <property type="match status" value="1"/>
</dbReference>
<dbReference type="HAMAP" id="MF_00137">
    <property type="entry name" value="SAICAR_synth"/>
    <property type="match status" value="1"/>
</dbReference>
<dbReference type="InterPro" id="IPR028923">
    <property type="entry name" value="SAICAR_synt/ADE2_N"/>
</dbReference>
<dbReference type="InterPro" id="IPR033934">
    <property type="entry name" value="SAICAR_synt_PurC"/>
</dbReference>
<dbReference type="InterPro" id="IPR001636">
    <property type="entry name" value="SAICAR_synth"/>
</dbReference>
<dbReference type="InterPro" id="IPR050089">
    <property type="entry name" value="SAICAR_synthetase"/>
</dbReference>
<dbReference type="InterPro" id="IPR018236">
    <property type="entry name" value="SAICAR_synthetase_CS"/>
</dbReference>
<dbReference type="NCBIfam" id="TIGR00081">
    <property type="entry name" value="purC"/>
    <property type="match status" value="1"/>
</dbReference>
<dbReference type="PANTHER" id="PTHR43599">
    <property type="entry name" value="MULTIFUNCTIONAL PROTEIN ADE2"/>
    <property type="match status" value="1"/>
</dbReference>
<dbReference type="PANTHER" id="PTHR43599:SF3">
    <property type="entry name" value="SI:DKEY-6E2.2"/>
    <property type="match status" value="1"/>
</dbReference>
<dbReference type="Pfam" id="PF01259">
    <property type="entry name" value="SAICAR_synt"/>
    <property type="match status" value="1"/>
</dbReference>
<dbReference type="SUPFAM" id="SSF56104">
    <property type="entry name" value="SAICAR synthase-like"/>
    <property type="match status" value="1"/>
</dbReference>
<dbReference type="PROSITE" id="PS01057">
    <property type="entry name" value="SAICAR_SYNTHETASE_1"/>
    <property type="match status" value="1"/>
</dbReference>
<dbReference type="PROSITE" id="PS01058">
    <property type="entry name" value="SAICAR_SYNTHETASE_2"/>
    <property type="match status" value="1"/>
</dbReference>
<accession>Q02IH8</accession>
<keyword id="KW-0067">ATP-binding</keyword>
<keyword id="KW-0436">Ligase</keyword>
<keyword id="KW-0547">Nucleotide-binding</keyword>
<keyword id="KW-0658">Purine biosynthesis</keyword>
<protein>
    <recommendedName>
        <fullName evidence="1">Phosphoribosylaminoimidazole-succinocarboxamide synthase</fullName>
        <ecNumber evidence="1">6.3.2.6</ecNumber>
    </recommendedName>
    <alternativeName>
        <fullName evidence="1">SAICAR synthetase</fullName>
    </alternativeName>
</protein>
<comment type="catalytic activity">
    <reaction evidence="1">
        <text>5-amino-1-(5-phospho-D-ribosyl)imidazole-4-carboxylate + L-aspartate + ATP = (2S)-2-[5-amino-1-(5-phospho-beta-D-ribosyl)imidazole-4-carboxamido]succinate + ADP + phosphate + 2 H(+)</text>
        <dbReference type="Rhea" id="RHEA:22628"/>
        <dbReference type="ChEBI" id="CHEBI:15378"/>
        <dbReference type="ChEBI" id="CHEBI:29991"/>
        <dbReference type="ChEBI" id="CHEBI:30616"/>
        <dbReference type="ChEBI" id="CHEBI:43474"/>
        <dbReference type="ChEBI" id="CHEBI:58443"/>
        <dbReference type="ChEBI" id="CHEBI:77657"/>
        <dbReference type="ChEBI" id="CHEBI:456216"/>
        <dbReference type="EC" id="6.3.2.6"/>
    </reaction>
</comment>
<comment type="pathway">
    <text evidence="1">Purine metabolism; IMP biosynthesis via de novo pathway; 5-amino-1-(5-phospho-D-ribosyl)imidazole-4-carboxamide from 5-amino-1-(5-phospho-D-ribosyl)imidazole-4-carboxylate: step 1/2.</text>
</comment>
<comment type="similarity">
    <text evidence="1">Belongs to the SAICAR synthetase family.</text>
</comment>
<evidence type="ECO:0000255" key="1">
    <source>
        <dbReference type="HAMAP-Rule" id="MF_00137"/>
    </source>
</evidence>
<gene>
    <name evidence="1" type="primary">purC</name>
    <name type="ordered locus">PA14_51240</name>
</gene>
<reference key="1">
    <citation type="journal article" date="2006" name="Genome Biol.">
        <title>Genomic analysis reveals that Pseudomonas aeruginosa virulence is combinatorial.</title>
        <authorList>
            <person name="Lee D.G."/>
            <person name="Urbach J.M."/>
            <person name="Wu G."/>
            <person name="Liberati N.T."/>
            <person name="Feinbaum R.L."/>
            <person name="Miyata S."/>
            <person name="Diggins L.T."/>
            <person name="He J."/>
            <person name="Saucier M."/>
            <person name="Deziel E."/>
            <person name="Friedman L."/>
            <person name="Li L."/>
            <person name="Grills G."/>
            <person name="Montgomery K."/>
            <person name="Kucherlapati R."/>
            <person name="Rahme L.G."/>
            <person name="Ausubel F.M."/>
        </authorList>
    </citation>
    <scope>NUCLEOTIDE SEQUENCE [LARGE SCALE GENOMIC DNA]</scope>
    <source>
        <strain>UCBPP-PA14</strain>
    </source>
</reference>